<feature type="chain" id="PRO_0000089032" description="Actin-2">
    <location>
        <begin position="1"/>
        <end position="375"/>
    </location>
</feature>
<evidence type="ECO:0000250" key="1">
    <source>
        <dbReference type="UniProtKB" id="P60010"/>
    </source>
</evidence>
<evidence type="ECO:0000305" key="2"/>
<comment type="function">
    <text>Actins are highly conserved proteins that are involved in various types of cell motility and are ubiquitously expressed in all eukaryotic cells.</text>
</comment>
<comment type="catalytic activity">
    <reaction evidence="1">
        <text>ATP + H2O = ADP + phosphate + H(+)</text>
        <dbReference type="Rhea" id="RHEA:13065"/>
        <dbReference type="ChEBI" id="CHEBI:15377"/>
        <dbReference type="ChEBI" id="CHEBI:15378"/>
        <dbReference type="ChEBI" id="CHEBI:30616"/>
        <dbReference type="ChEBI" id="CHEBI:43474"/>
        <dbReference type="ChEBI" id="CHEBI:456216"/>
    </reaction>
</comment>
<comment type="subcellular location">
    <subcellularLocation>
        <location>Cytoplasm</location>
        <location>Cytoskeleton</location>
    </subcellularLocation>
</comment>
<comment type="similarity">
    <text evidence="2">Belongs to the actin family.</text>
</comment>
<sequence>MEEEVAALVIDNGSGMCKAGFAGDDAPRAVFPSIVGRPRHQGVMVGMGQKDSYVGDEAQSKRGILTLKYPIEHGIVTNWDDMEKIWHHTFYNELRVAPEEHPVLLTEAPLNPKANREKMTQIMFETFNAPAFYVSIQAVLSLYASGRTTGIVMDSGDGVTHTVPIYEGFSLPHAILRLDLAGRDLTDCLIKNLTERGYSFTTTAEREIVRDIKEKLCYVALDFEQEMQTAAQSSALEKSYELPDGQVITIGNERFRAPEALFQPAFLGLESAGIHETTYNSIYKCDLDIRRDLYGNVVLSGGTTMFPGIADRMQKELTSLSPSSMKVKIVAPPERKYSVWIGGSILASLSTFQNLWCSKQEYDESGPGIVHRKCF</sequence>
<dbReference type="EC" id="3.6.4.-" evidence="1"/>
<dbReference type="EMBL" id="AF156259">
    <property type="protein sequence ID" value="AAD38855.1"/>
    <property type="molecule type" value="Genomic_DNA"/>
</dbReference>
<dbReference type="EMBL" id="AF156258">
    <property type="protein sequence ID" value="AAD38854.1"/>
    <property type="molecule type" value="mRNA"/>
</dbReference>
<dbReference type="SMR" id="Q9Y707"/>
<dbReference type="OrthoDB" id="5132116at2759"/>
<dbReference type="GO" id="GO:0005737">
    <property type="term" value="C:cytoplasm"/>
    <property type="evidence" value="ECO:0007669"/>
    <property type="project" value="UniProtKB-KW"/>
</dbReference>
<dbReference type="GO" id="GO:0005856">
    <property type="term" value="C:cytoskeleton"/>
    <property type="evidence" value="ECO:0007669"/>
    <property type="project" value="UniProtKB-SubCell"/>
</dbReference>
<dbReference type="GO" id="GO:0005524">
    <property type="term" value="F:ATP binding"/>
    <property type="evidence" value="ECO:0007669"/>
    <property type="project" value="UniProtKB-KW"/>
</dbReference>
<dbReference type="GO" id="GO:0016787">
    <property type="term" value="F:hydrolase activity"/>
    <property type="evidence" value="ECO:0007669"/>
    <property type="project" value="UniProtKB-KW"/>
</dbReference>
<dbReference type="CDD" id="cd10224">
    <property type="entry name" value="ASKHA_NBD_actin"/>
    <property type="match status" value="1"/>
</dbReference>
<dbReference type="FunFam" id="2.30.36.70:FF:000001">
    <property type="entry name" value="Actin, alpha skeletal muscle"/>
    <property type="match status" value="1"/>
</dbReference>
<dbReference type="FunFam" id="3.30.420.40:FF:000291">
    <property type="entry name" value="Actin, alpha skeletal muscle"/>
    <property type="match status" value="1"/>
</dbReference>
<dbReference type="FunFam" id="3.90.640.10:FF:000047">
    <property type="entry name" value="Actin, alpha skeletal muscle"/>
    <property type="match status" value="1"/>
</dbReference>
<dbReference type="FunFam" id="3.30.420.40:FF:000404">
    <property type="entry name" value="Major actin"/>
    <property type="match status" value="1"/>
</dbReference>
<dbReference type="FunFam" id="3.30.420.40:FF:000058">
    <property type="entry name" value="Putative actin-related protein 5"/>
    <property type="match status" value="1"/>
</dbReference>
<dbReference type="Gene3D" id="3.30.420.40">
    <property type="match status" value="2"/>
</dbReference>
<dbReference type="Gene3D" id="3.90.640.10">
    <property type="entry name" value="Actin, Chain A, domain 4"/>
    <property type="match status" value="1"/>
</dbReference>
<dbReference type="InterPro" id="IPR004000">
    <property type="entry name" value="Actin"/>
</dbReference>
<dbReference type="InterPro" id="IPR020902">
    <property type="entry name" value="Actin/actin-like_CS"/>
</dbReference>
<dbReference type="InterPro" id="IPR004001">
    <property type="entry name" value="Actin_CS"/>
</dbReference>
<dbReference type="InterPro" id="IPR043129">
    <property type="entry name" value="ATPase_NBD"/>
</dbReference>
<dbReference type="PANTHER" id="PTHR11937">
    <property type="entry name" value="ACTIN"/>
    <property type="match status" value="1"/>
</dbReference>
<dbReference type="Pfam" id="PF00022">
    <property type="entry name" value="Actin"/>
    <property type="match status" value="1"/>
</dbReference>
<dbReference type="PRINTS" id="PR00190">
    <property type="entry name" value="ACTIN"/>
</dbReference>
<dbReference type="SMART" id="SM00268">
    <property type="entry name" value="ACTIN"/>
    <property type="match status" value="1"/>
</dbReference>
<dbReference type="SUPFAM" id="SSF53067">
    <property type="entry name" value="Actin-like ATPase domain"/>
    <property type="match status" value="2"/>
</dbReference>
<dbReference type="PROSITE" id="PS00406">
    <property type="entry name" value="ACTINS_1"/>
    <property type="match status" value="1"/>
</dbReference>
<dbReference type="PROSITE" id="PS00432">
    <property type="entry name" value="ACTINS_2"/>
    <property type="match status" value="1"/>
</dbReference>
<dbReference type="PROSITE" id="PS01132">
    <property type="entry name" value="ACTINS_ACT_LIKE"/>
    <property type="match status" value="1"/>
</dbReference>
<proteinExistence type="evidence at transcript level"/>
<keyword id="KW-0067">ATP-binding</keyword>
<keyword id="KW-0963">Cytoplasm</keyword>
<keyword id="KW-0206">Cytoskeleton</keyword>
<keyword id="KW-0378">Hydrolase</keyword>
<keyword id="KW-0547">Nucleotide-binding</keyword>
<reference key="1">
    <citation type="journal article" date="2000" name="Gene">
        <title>Molecular characterization of actin genes from homobasidiomycetes: two different actin genes from Schizophyllum commune and Suillus bovinus.</title>
        <authorList>
            <person name="Tarkka M.T."/>
            <person name="Vasara R."/>
            <person name="Gorfer M."/>
            <person name="Raudaskoski M."/>
        </authorList>
    </citation>
    <scope>NUCLEOTIDE SEQUENCE [GENOMIC DNA / MRNA]</scope>
    <source>
        <strain>Read-096</strain>
    </source>
</reference>
<organism>
    <name type="scientific">Suillus bovinus</name>
    <name type="common">Jersey cow bolete</name>
    <name type="synonym">Boletus bovinus</name>
    <dbReference type="NCBI Taxonomy" id="48563"/>
    <lineage>
        <taxon>Eukaryota</taxon>
        <taxon>Fungi</taxon>
        <taxon>Dikarya</taxon>
        <taxon>Basidiomycota</taxon>
        <taxon>Agaricomycotina</taxon>
        <taxon>Agaricomycetes</taxon>
        <taxon>Agaricomycetidae</taxon>
        <taxon>Boletales</taxon>
        <taxon>Suillineae</taxon>
        <taxon>Suillaceae</taxon>
        <taxon>Suillus</taxon>
    </lineage>
</organism>
<protein>
    <recommendedName>
        <fullName>Actin-2</fullName>
        <ecNumber evidence="1">3.6.4.-</ecNumber>
    </recommendedName>
</protein>
<gene>
    <name type="primary">ACT2</name>
</gene>
<name>ACT2_SUIBO</name>
<accession>Q9Y707</accession>